<name>PSBK_TRIEI</name>
<proteinExistence type="inferred from homology"/>
<keyword id="KW-0472">Membrane</keyword>
<keyword id="KW-0602">Photosynthesis</keyword>
<keyword id="KW-0604">Photosystem II</keyword>
<keyword id="KW-0674">Reaction center</keyword>
<keyword id="KW-0793">Thylakoid</keyword>
<keyword id="KW-0812">Transmembrane</keyword>
<keyword id="KW-1133">Transmembrane helix</keyword>
<evidence type="ECO:0000255" key="1">
    <source>
        <dbReference type="HAMAP-Rule" id="MF_00441"/>
    </source>
</evidence>
<accession>Q10XU6</accession>
<dbReference type="EMBL" id="CP000393">
    <property type="protein sequence ID" value="ABG52928.1"/>
    <property type="molecule type" value="Genomic_DNA"/>
</dbReference>
<dbReference type="RefSeq" id="WP_011613258.1">
    <property type="nucleotide sequence ID" value="NC_008312.1"/>
</dbReference>
<dbReference type="SMR" id="Q10XU6"/>
<dbReference type="STRING" id="203124.Tery_3892"/>
<dbReference type="KEGG" id="ter:Tery_3892"/>
<dbReference type="eggNOG" id="ENOG5032YQR">
    <property type="taxonomic scope" value="Bacteria"/>
</dbReference>
<dbReference type="HOGENOM" id="CLU_174355_0_0_3"/>
<dbReference type="GO" id="GO:0009539">
    <property type="term" value="C:photosystem II reaction center"/>
    <property type="evidence" value="ECO:0007669"/>
    <property type="project" value="InterPro"/>
</dbReference>
<dbReference type="GO" id="GO:0031676">
    <property type="term" value="C:plasma membrane-derived thylakoid membrane"/>
    <property type="evidence" value="ECO:0007669"/>
    <property type="project" value="UniProtKB-SubCell"/>
</dbReference>
<dbReference type="GO" id="GO:0015979">
    <property type="term" value="P:photosynthesis"/>
    <property type="evidence" value="ECO:0007669"/>
    <property type="project" value="UniProtKB-UniRule"/>
</dbReference>
<dbReference type="HAMAP" id="MF_00441">
    <property type="entry name" value="PSII_PsbK"/>
    <property type="match status" value="1"/>
</dbReference>
<dbReference type="InterPro" id="IPR003687">
    <property type="entry name" value="PSII_PsbK"/>
</dbReference>
<dbReference type="InterPro" id="IPR037270">
    <property type="entry name" value="PSII_PsbK_sf"/>
</dbReference>
<dbReference type="NCBIfam" id="NF002715">
    <property type="entry name" value="PRK02553.1"/>
    <property type="match status" value="1"/>
</dbReference>
<dbReference type="PANTHER" id="PTHR35325">
    <property type="match status" value="1"/>
</dbReference>
<dbReference type="PANTHER" id="PTHR35325:SF1">
    <property type="entry name" value="PHOTOSYSTEM II REACTION CENTER PROTEIN K"/>
    <property type="match status" value="1"/>
</dbReference>
<dbReference type="Pfam" id="PF02533">
    <property type="entry name" value="PsbK"/>
    <property type="match status" value="1"/>
</dbReference>
<dbReference type="SUPFAM" id="SSF161037">
    <property type="entry name" value="Photosystem II reaction center protein K, PsbK"/>
    <property type="match status" value="1"/>
</dbReference>
<gene>
    <name evidence="1" type="primary">psbK</name>
    <name type="ordered locus">Tery_3892</name>
</gene>
<sequence>MELAMLLAKLPEAYSVFNPLVDVLPVIPVFFLLLAFVWQAAVGFR</sequence>
<comment type="function">
    <text evidence="1">One of the components of the core complex of photosystem II (PSII). PSII is a light-driven water:plastoquinone oxidoreductase that uses light energy to abstract electrons from H(2)O, generating O(2) and a proton gradient subsequently used for ATP formation. It consists of a core antenna complex that captures photons, and an electron transfer chain that converts photonic excitation into a charge separation.</text>
</comment>
<comment type="subunit">
    <text evidence="1">PSII is composed of 1 copy each of membrane proteins PsbA, PsbB, PsbC, PsbD, PsbE, PsbF, PsbH, PsbI, PsbJ, PsbK, PsbL, PsbM, PsbT, PsbX, PsbY, PsbZ, Psb30/Ycf12, peripheral proteins PsbO, CyanoQ (PsbQ), PsbU, PsbV and a large number of cofactors. It forms dimeric complexes.</text>
</comment>
<comment type="subcellular location">
    <subcellularLocation>
        <location evidence="1">Cellular thylakoid membrane</location>
        <topology evidence="1">Single-pass membrane protein</topology>
    </subcellularLocation>
</comment>
<comment type="similarity">
    <text evidence="1">Belongs to the PsbK family.</text>
</comment>
<organism>
    <name type="scientific">Trichodesmium erythraeum (strain IMS101)</name>
    <dbReference type="NCBI Taxonomy" id="203124"/>
    <lineage>
        <taxon>Bacteria</taxon>
        <taxon>Bacillati</taxon>
        <taxon>Cyanobacteriota</taxon>
        <taxon>Cyanophyceae</taxon>
        <taxon>Oscillatoriophycideae</taxon>
        <taxon>Oscillatoriales</taxon>
        <taxon>Microcoleaceae</taxon>
        <taxon>Trichodesmium</taxon>
    </lineage>
</organism>
<feature type="propeptide" id="PRO_0000316084" evidence="1">
    <location>
        <begin position="1"/>
        <end position="8"/>
    </location>
</feature>
<feature type="chain" id="PRO_1000025987" description="Photosystem II reaction center protein K" evidence="1">
    <location>
        <begin position="9"/>
        <end position="45"/>
    </location>
</feature>
<feature type="transmembrane region" description="Helical" evidence="1">
    <location>
        <begin position="24"/>
        <end position="44"/>
    </location>
</feature>
<protein>
    <recommendedName>
        <fullName evidence="1">Photosystem II reaction center protein K</fullName>
        <shortName evidence="1">PSII-K</shortName>
    </recommendedName>
</protein>
<reference key="1">
    <citation type="journal article" date="2015" name="Proc. Natl. Acad. Sci. U.S.A.">
        <title>Trichodesmium genome maintains abundant, widespread noncoding DNA in situ, despite oligotrophic lifestyle.</title>
        <authorList>
            <person name="Walworth N."/>
            <person name="Pfreundt U."/>
            <person name="Nelson W.C."/>
            <person name="Mincer T."/>
            <person name="Heidelberg J.F."/>
            <person name="Fu F."/>
            <person name="Waterbury J.B."/>
            <person name="Glavina del Rio T."/>
            <person name="Goodwin L."/>
            <person name="Kyrpides N.C."/>
            <person name="Land M.L."/>
            <person name="Woyke T."/>
            <person name="Hutchins D.A."/>
            <person name="Hess W.R."/>
            <person name="Webb E.A."/>
        </authorList>
    </citation>
    <scope>NUCLEOTIDE SEQUENCE [LARGE SCALE GENOMIC DNA]</scope>
    <source>
        <strain>IMS101</strain>
    </source>
</reference>